<accession>Q7W134</accession>
<reference key="1">
    <citation type="journal article" date="2003" name="Nat. Genet.">
        <title>Comparative analysis of the genome sequences of Bordetella pertussis, Bordetella parapertussis and Bordetella bronchiseptica.</title>
        <authorList>
            <person name="Parkhill J."/>
            <person name="Sebaihia M."/>
            <person name="Preston A."/>
            <person name="Murphy L.D."/>
            <person name="Thomson N.R."/>
            <person name="Harris D.E."/>
            <person name="Holden M.T.G."/>
            <person name="Churcher C.M."/>
            <person name="Bentley S.D."/>
            <person name="Mungall K.L."/>
            <person name="Cerdeno-Tarraga A.-M."/>
            <person name="Temple L."/>
            <person name="James K.D."/>
            <person name="Harris B."/>
            <person name="Quail M.A."/>
            <person name="Achtman M."/>
            <person name="Atkin R."/>
            <person name="Baker S."/>
            <person name="Basham D."/>
            <person name="Bason N."/>
            <person name="Cherevach I."/>
            <person name="Chillingworth T."/>
            <person name="Collins M."/>
            <person name="Cronin A."/>
            <person name="Davis P."/>
            <person name="Doggett J."/>
            <person name="Feltwell T."/>
            <person name="Goble A."/>
            <person name="Hamlin N."/>
            <person name="Hauser H."/>
            <person name="Holroyd S."/>
            <person name="Jagels K."/>
            <person name="Leather S."/>
            <person name="Moule S."/>
            <person name="Norberczak H."/>
            <person name="O'Neil S."/>
            <person name="Ormond D."/>
            <person name="Price C."/>
            <person name="Rabbinowitsch E."/>
            <person name="Rutter S."/>
            <person name="Sanders M."/>
            <person name="Saunders D."/>
            <person name="Seeger K."/>
            <person name="Sharp S."/>
            <person name="Simmonds M."/>
            <person name="Skelton J."/>
            <person name="Squares R."/>
            <person name="Squares S."/>
            <person name="Stevens K."/>
            <person name="Unwin L."/>
            <person name="Whitehead S."/>
            <person name="Barrell B.G."/>
            <person name="Maskell D.J."/>
        </authorList>
    </citation>
    <scope>NUCLEOTIDE SEQUENCE [LARGE SCALE GENOMIC DNA]</scope>
    <source>
        <strain>12822 / ATCC BAA-587 / NCTC 13253</strain>
    </source>
</reference>
<keyword id="KW-0067">ATP-binding</keyword>
<keyword id="KW-0143">Chaperone</keyword>
<keyword id="KW-0963">Cytoplasm</keyword>
<keyword id="KW-0413">Isomerase</keyword>
<keyword id="KW-0547">Nucleotide-binding</keyword>
<comment type="function">
    <text evidence="1">Together with its co-chaperonin GroES, plays an essential role in assisting protein folding. The GroEL-GroES system forms a nano-cage that allows encapsulation of the non-native substrate proteins and provides a physical environment optimized to promote and accelerate protein folding.</text>
</comment>
<comment type="catalytic activity">
    <reaction evidence="1">
        <text>ATP + H2O + a folded polypeptide = ADP + phosphate + an unfolded polypeptide.</text>
        <dbReference type="EC" id="5.6.1.7"/>
    </reaction>
</comment>
<comment type="subunit">
    <text evidence="1">Forms a cylinder of 14 subunits composed of two heptameric rings stacked back-to-back. Interacts with the co-chaperonin GroES.</text>
</comment>
<comment type="subcellular location">
    <subcellularLocation>
        <location evidence="1">Cytoplasm</location>
    </subcellularLocation>
</comment>
<comment type="similarity">
    <text evidence="1">Belongs to the chaperonin (HSP60) family.</text>
</comment>
<organism>
    <name type="scientific">Bordetella parapertussis (strain 12822 / ATCC BAA-587 / NCTC 13253)</name>
    <dbReference type="NCBI Taxonomy" id="257311"/>
    <lineage>
        <taxon>Bacteria</taxon>
        <taxon>Pseudomonadati</taxon>
        <taxon>Pseudomonadota</taxon>
        <taxon>Betaproteobacteria</taxon>
        <taxon>Burkholderiales</taxon>
        <taxon>Alcaligenaceae</taxon>
        <taxon>Bordetella</taxon>
    </lineage>
</organism>
<feature type="chain" id="PRO_0000063292" description="Chaperonin GroEL">
    <location>
        <begin position="1"/>
        <end position="547"/>
    </location>
</feature>
<feature type="binding site" evidence="1">
    <location>
        <begin position="30"/>
        <end position="33"/>
    </location>
    <ligand>
        <name>ATP</name>
        <dbReference type="ChEBI" id="CHEBI:30616"/>
    </ligand>
</feature>
<feature type="binding site" evidence="1">
    <location>
        <position position="51"/>
    </location>
    <ligand>
        <name>ATP</name>
        <dbReference type="ChEBI" id="CHEBI:30616"/>
    </ligand>
</feature>
<feature type="binding site" evidence="1">
    <location>
        <begin position="87"/>
        <end position="91"/>
    </location>
    <ligand>
        <name>ATP</name>
        <dbReference type="ChEBI" id="CHEBI:30616"/>
    </ligand>
</feature>
<feature type="binding site" evidence="1">
    <location>
        <position position="415"/>
    </location>
    <ligand>
        <name>ATP</name>
        <dbReference type="ChEBI" id="CHEBI:30616"/>
    </ligand>
</feature>
<feature type="binding site" evidence="1">
    <location>
        <begin position="479"/>
        <end position="481"/>
    </location>
    <ligand>
        <name>ATP</name>
        <dbReference type="ChEBI" id="CHEBI:30616"/>
    </ligand>
</feature>
<feature type="binding site" evidence="1">
    <location>
        <position position="495"/>
    </location>
    <ligand>
        <name>ATP</name>
        <dbReference type="ChEBI" id="CHEBI:30616"/>
    </ligand>
</feature>
<dbReference type="EC" id="5.6.1.7" evidence="1"/>
<dbReference type="EMBL" id="BX640425">
    <property type="protein sequence ID" value="CAE40277.1"/>
    <property type="molecule type" value="Genomic_DNA"/>
</dbReference>
<dbReference type="RefSeq" id="WP_003808619.1">
    <property type="nucleotide sequence ID" value="NC_002928.3"/>
</dbReference>
<dbReference type="SMR" id="Q7W134"/>
<dbReference type="GeneID" id="93202618"/>
<dbReference type="KEGG" id="bpa:BPP0868"/>
<dbReference type="HOGENOM" id="CLU_016503_3_0_4"/>
<dbReference type="Proteomes" id="UP000001421">
    <property type="component" value="Chromosome"/>
</dbReference>
<dbReference type="GO" id="GO:0005737">
    <property type="term" value="C:cytoplasm"/>
    <property type="evidence" value="ECO:0007669"/>
    <property type="project" value="UniProtKB-SubCell"/>
</dbReference>
<dbReference type="GO" id="GO:0005524">
    <property type="term" value="F:ATP binding"/>
    <property type="evidence" value="ECO:0007669"/>
    <property type="project" value="UniProtKB-UniRule"/>
</dbReference>
<dbReference type="GO" id="GO:0140662">
    <property type="term" value="F:ATP-dependent protein folding chaperone"/>
    <property type="evidence" value="ECO:0007669"/>
    <property type="project" value="InterPro"/>
</dbReference>
<dbReference type="GO" id="GO:0016853">
    <property type="term" value="F:isomerase activity"/>
    <property type="evidence" value="ECO:0007669"/>
    <property type="project" value="UniProtKB-KW"/>
</dbReference>
<dbReference type="GO" id="GO:0051082">
    <property type="term" value="F:unfolded protein binding"/>
    <property type="evidence" value="ECO:0007669"/>
    <property type="project" value="UniProtKB-UniRule"/>
</dbReference>
<dbReference type="GO" id="GO:0042026">
    <property type="term" value="P:protein refolding"/>
    <property type="evidence" value="ECO:0007669"/>
    <property type="project" value="UniProtKB-UniRule"/>
</dbReference>
<dbReference type="CDD" id="cd03344">
    <property type="entry name" value="GroEL"/>
    <property type="match status" value="1"/>
</dbReference>
<dbReference type="FunFam" id="1.10.560.10:FF:000001">
    <property type="entry name" value="60 kDa chaperonin"/>
    <property type="match status" value="1"/>
</dbReference>
<dbReference type="FunFam" id="3.50.7.10:FF:000001">
    <property type="entry name" value="60 kDa chaperonin"/>
    <property type="match status" value="1"/>
</dbReference>
<dbReference type="Gene3D" id="3.50.7.10">
    <property type="entry name" value="GroEL"/>
    <property type="match status" value="1"/>
</dbReference>
<dbReference type="Gene3D" id="1.10.560.10">
    <property type="entry name" value="GroEL-like equatorial domain"/>
    <property type="match status" value="1"/>
</dbReference>
<dbReference type="Gene3D" id="3.30.260.10">
    <property type="entry name" value="TCP-1-like chaperonin intermediate domain"/>
    <property type="match status" value="1"/>
</dbReference>
<dbReference type="HAMAP" id="MF_00600">
    <property type="entry name" value="CH60"/>
    <property type="match status" value="1"/>
</dbReference>
<dbReference type="InterPro" id="IPR018370">
    <property type="entry name" value="Chaperonin_Cpn60_CS"/>
</dbReference>
<dbReference type="InterPro" id="IPR001844">
    <property type="entry name" value="Cpn60/GroEL"/>
</dbReference>
<dbReference type="InterPro" id="IPR002423">
    <property type="entry name" value="Cpn60/GroEL/TCP-1"/>
</dbReference>
<dbReference type="InterPro" id="IPR027409">
    <property type="entry name" value="GroEL-like_apical_dom_sf"/>
</dbReference>
<dbReference type="InterPro" id="IPR027413">
    <property type="entry name" value="GROEL-like_equatorial_sf"/>
</dbReference>
<dbReference type="InterPro" id="IPR027410">
    <property type="entry name" value="TCP-1-like_intermed_sf"/>
</dbReference>
<dbReference type="NCBIfam" id="TIGR02348">
    <property type="entry name" value="GroEL"/>
    <property type="match status" value="1"/>
</dbReference>
<dbReference type="NCBIfam" id="NF000592">
    <property type="entry name" value="PRK00013.1"/>
    <property type="match status" value="1"/>
</dbReference>
<dbReference type="NCBIfam" id="NF009487">
    <property type="entry name" value="PRK12849.1"/>
    <property type="match status" value="1"/>
</dbReference>
<dbReference type="NCBIfam" id="NF009488">
    <property type="entry name" value="PRK12850.1"/>
    <property type="match status" value="1"/>
</dbReference>
<dbReference type="NCBIfam" id="NF009489">
    <property type="entry name" value="PRK12851.1"/>
    <property type="match status" value="1"/>
</dbReference>
<dbReference type="PANTHER" id="PTHR45633">
    <property type="entry name" value="60 KDA HEAT SHOCK PROTEIN, MITOCHONDRIAL"/>
    <property type="match status" value="1"/>
</dbReference>
<dbReference type="Pfam" id="PF00118">
    <property type="entry name" value="Cpn60_TCP1"/>
    <property type="match status" value="1"/>
</dbReference>
<dbReference type="PRINTS" id="PR00298">
    <property type="entry name" value="CHAPERONIN60"/>
</dbReference>
<dbReference type="SUPFAM" id="SSF52029">
    <property type="entry name" value="GroEL apical domain-like"/>
    <property type="match status" value="1"/>
</dbReference>
<dbReference type="SUPFAM" id="SSF48592">
    <property type="entry name" value="GroEL equatorial domain-like"/>
    <property type="match status" value="1"/>
</dbReference>
<dbReference type="SUPFAM" id="SSF54849">
    <property type="entry name" value="GroEL-intermediate domain like"/>
    <property type="match status" value="1"/>
</dbReference>
<dbReference type="PROSITE" id="PS00296">
    <property type="entry name" value="CHAPERONINS_CPN60"/>
    <property type="match status" value="1"/>
</dbReference>
<protein>
    <recommendedName>
        <fullName evidence="1">Chaperonin GroEL</fullName>
        <ecNumber evidence="1">5.6.1.7</ecNumber>
    </recommendedName>
    <alternativeName>
        <fullName evidence="1">60 kDa chaperonin</fullName>
    </alternativeName>
    <alternativeName>
        <fullName evidence="1">Chaperonin-60</fullName>
        <shortName evidence="1">Cpn60</shortName>
    </alternativeName>
</protein>
<evidence type="ECO:0000255" key="1">
    <source>
        <dbReference type="HAMAP-Rule" id="MF_00600"/>
    </source>
</evidence>
<name>CH60_BORPA</name>
<sequence>MAAKQVLFADEARVRIVRGVNVLANAVKTTLGPKGRNVVLERSFGAPTVTKDGVSVAKEIELKDKFENIGAQLVKDVASKTSDNAGDGTTTATVLAQAVVQEGLKYVAAGFNPIDLKRGIDKAVAAAVEELKKLSKPVTTSKEIAQVGSISANSDASIGQIIADAMDKVGKEGVITVEDGKSLENELDVVEGMQFDRGYLSPYFINSPEKQVAALDDPYVLIYDKKVSNIRDLLPVLEQVAKSSRPLLIIAEDVEGEALATLVVNNIRGILKTTAVKAPGFGDRRKAMLEDIAILTGGTVISEETGMSLEKATLQDLGQAKRIEVAKENTTIIDGAGDGKSIEARVKQIRAQIEEATSDYDREKLQERVAKLAGGVAVIRVGAATEVEMKEKKARVEDALHATRAAVEEGVVPGGGVALLRAKQAITGLKGDTADQNAGIKLILRAVEEPLRTIVTNAGDEASVVVNTVLNGKGNYGYNAATGEYGDLVEQGVLDPTKVTRTALQNAASVASLLLTAEAAVVELMEDKPAAAPAMPGGMGGMGGMDF</sequence>
<proteinExistence type="inferred from homology"/>
<gene>
    <name evidence="1" type="primary">groEL</name>
    <name type="synonym">cpn60</name>
    <name evidence="1" type="synonym">groL</name>
    <name type="synonym">mopA</name>
    <name type="ordered locus">BPP0868</name>
</gene>